<organism>
    <name type="scientific">Salmonella paratyphi A (strain ATCC 9150 / SARB42)</name>
    <dbReference type="NCBI Taxonomy" id="295319"/>
    <lineage>
        <taxon>Bacteria</taxon>
        <taxon>Pseudomonadati</taxon>
        <taxon>Pseudomonadota</taxon>
        <taxon>Gammaproteobacteria</taxon>
        <taxon>Enterobacterales</taxon>
        <taxon>Enterobacteriaceae</taxon>
        <taxon>Salmonella</taxon>
    </lineage>
</organism>
<evidence type="ECO:0000250" key="1"/>
<evidence type="ECO:0000255" key="2">
    <source>
        <dbReference type="HAMAP-Rule" id="MF_00741"/>
    </source>
</evidence>
<accession>Q5PNJ8</accession>
<feature type="initiator methionine" description="Removed" evidence="1">
    <location>
        <position position="1"/>
    </location>
</feature>
<feature type="chain" id="PRO_0000258401" description="Phosphoribosylformylglycinamidine cyclo-ligase">
    <location>
        <begin position="2"/>
        <end position="345"/>
    </location>
</feature>
<keyword id="KW-0067">ATP-binding</keyword>
<keyword id="KW-0963">Cytoplasm</keyword>
<keyword id="KW-0436">Ligase</keyword>
<keyword id="KW-0547">Nucleotide-binding</keyword>
<keyword id="KW-0658">Purine biosynthesis</keyword>
<proteinExistence type="inferred from homology"/>
<dbReference type="EC" id="6.3.3.1" evidence="2"/>
<dbReference type="EMBL" id="CP000026">
    <property type="protein sequence ID" value="AAV76381.1"/>
    <property type="molecule type" value="Genomic_DNA"/>
</dbReference>
<dbReference type="RefSeq" id="WP_000130477.1">
    <property type="nucleotide sequence ID" value="NC_006511.1"/>
</dbReference>
<dbReference type="SMR" id="Q5PNJ8"/>
<dbReference type="KEGG" id="spt:SPA0368"/>
<dbReference type="HOGENOM" id="CLU_047116_0_0_6"/>
<dbReference type="UniPathway" id="UPA00074">
    <property type="reaction ID" value="UER00129"/>
</dbReference>
<dbReference type="Proteomes" id="UP000008185">
    <property type="component" value="Chromosome"/>
</dbReference>
<dbReference type="GO" id="GO:0005829">
    <property type="term" value="C:cytosol"/>
    <property type="evidence" value="ECO:0007669"/>
    <property type="project" value="TreeGrafter"/>
</dbReference>
<dbReference type="GO" id="GO:0005524">
    <property type="term" value="F:ATP binding"/>
    <property type="evidence" value="ECO:0007669"/>
    <property type="project" value="UniProtKB-KW"/>
</dbReference>
<dbReference type="GO" id="GO:0004637">
    <property type="term" value="F:phosphoribosylamine-glycine ligase activity"/>
    <property type="evidence" value="ECO:0007669"/>
    <property type="project" value="TreeGrafter"/>
</dbReference>
<dbReference type="GO" id="GO:0004641">
    <property type="term" value="F:phosphoribosylformylglycinamidine cyclo-ligase activity"/>
    <property type="evidence" value="ECO:0007669"/>
    <property type="project" value="UniProtKB-UniRule"/>
</dbReference>
<dbReference type="GO" id="GO:0006189">
    <property type="term" value="P:'de novo' IMP biosynthetic process"/>
    <property type="evidence" value="ECO:0007669"/>
    <property type="project" value="UniProtKB-UniRule"/>
</dbReference>
<dbReference type="GO" id="GO:0046084">
    <property type="term" value="P:adenine biosynthetic process"/>
    <property type="evidence" value="ECO:0007669"/>
    <property type="project" value="TreeGrafter"/>
</dbReference>
<dbReference type="CDD" id="cd02196">
    <property type="entry name" value="PurM"/>
    <property type="match status" value="1"/>
</dbReference>
<dbReference type="FunFam" id="3.30.1330.10:FF:000001">
    <property type="entry name" value="Phosphoribosylformylglycinamidine cyclo-ligase"/>
    <property type="match status" value="1"/>
</dbReference>
<dbReference type="FunFam" id="3.90.650.10:FF:000001">
    <property type="entry name" value="Phosphoribosylformylglycinamidine cyclo-ligase"/>
    <property type="match status" value="1"/>
</dbReference>
<dbReference type="Gene3D" id="3.90.650.10">
    <property type="entry name" value="PurM-like C-terminal domain"/>
    <property type="match status" value="1"/>
</dbReference>
<dbReference type="Gene3D" id="3.30.1330.10">
    <property type="entry name" value="PurM-like, N-terminal domain"/>
    <property type="match status" value="1"/>
</dbReference>
<dbReference type="HAMAP" id="MF_00741">
    <property type="entry name" value="AIRS"/>
    <property type="match status" value="1"/>
</dbReference>
<dbReference type="InterPro" id="IPR010918">
    <property type="entry name" value="PurM-like_C_dom"/>
</dbReference>
<dbReference type="InterPro" id="IPR036676">
    <property type="entry name" value="PurM-like_C_sf"/>
</dbReference>
<dbReference type="InterPro" id="IPR016188">
    <property type="entry name" value="PurM-like_N"/>
</dbReference>
<dbReference type="InterPro" id="IPR036921">
    <property type="entry name" value="PurM-like_N_sf"/>
</dbReference>
<dbReference type="InterPro" id="IPR004733">
    <property type="entry name" value="PurM_cligase"/>
</dbReference>
<dbReference type="NCBIfam" id="TIGR00878">
    <property type="entry name" value="purM"/>
    <property type="match status" value="1"/>
</dbReference>
<dbReference type="PANTHER" id="PTHR10520:SF12">
    <property type="entry name" value="TRIFUNCTIONAL PURINE BIOSYNTHETIC PROTEIN ADENOSINE-3"/>
    <property type="match status" value="1"/>
</dbReference>
<dbReference type="PANTHER" id="PTHR10520">
    <property type="entry name" value="TRIFUNCTIONAL PURINE BIOSYNTHETIC PROTEIN ADENOSINE-3-RELATED"/>
    <property type="match status" value="1"/>
</dbReference>
<dbReference type="Pfam" id="PF00586">
    <property type="entry name" value="AIRS"/>
    <property type="match status" value="1"/>
</dbReference>
<dbReference type="Pfam" id="PF02769">
    <property type="entry name" value="AIRS_C"/>
    <property type="match status" value="1"/>
</dbReference>
<dbReference type="SUPFAM" id="SSF56042">
    <property type="entry name" value="PurM C-terminal domain-like"/>
    <property type="match status" value="1"/>
</dbReference>
<dbReference type="SUPFAM" id="SSF55326">
    <property type="entry name" value="PurM N-terminal domain-like"/>
    <property type="match status" value="1"/>
</dbReference>
<name>PUR5_SALPA</name>
<gene>
    <name evidence="2" type="primary">purM</name>
    <name type="ordered locus">SPA0368</name>
</gene>
<comment type="catalytic activity">
    <reaction evidence="2">
        <text>2-formamido-N(1)-(5-O-phospho-beta-D-ribosyl)acetamidine + ATP = 5-amino-1-(5-phospho-beta-D-ribosyl)imidazole + ADP + phosphate + H(+)</text>
        <dbReference type="Rhea" id="RHEA:23032"/>
        <dbReference type="ChEBI" id="CHEBI:15378"/>
        <dbReference type="ChEBI" id="CHEBI:30616"/>
        <dbReference type="ChEBI" id="CHEBI:43474"/>
        <dbReference type="ChEBI" id="CHEBI:137981"/>
        <dbReference type="ChEBI" id="CHEBI:147287"/>
        <dbReference type="ChEBI" id="CHEBI:456216"/>
        <dbReference type="EC" id="6.3.3.1"/>
    </reaction>
</comment>
<comment type="pathway">
    <text evidence="2">Purine metabolism; IMP biosynthesis via de novo pathway; 5-amino-1-(5-phospho-D-ribosyl)imidazole from N(2)-formyl-N(1)-(5-phospho-D-ribosyl)glycinamide: step 2/2.</text>
</comment>
<comment type="subcellular location">
    <subcellularLocation>
        <location evidence="2">Cytoplasm</location>
    </subcellularLocation>
</comment>
<comment type="similarity">
    <text evidence="2">Belongs to the AIR synthase family.</text>
</comment>
<sequence>MTDKTSLSYKDAGVDIDAGNALVDRIKGVVKKTRRPEVMGGLGGFGALCALPQKYREPVLVSGTDGVGTKLRLAMDLKRHDAIGIDLVAMCVNDLVVQGAEPLFFLDYYATGKLDVDTAASVINGIAEGCLQSGCALVGGETAEMPGMYHGEDYDVAGFCVGVVEKSEIIDGSRVAEGDVLIALGSSGPHSNGYSLVRKIIDVSGCDPQTTLLEGKPLADHLLEPTRIYVKSVLELIENVDVHAIAHLTGGGFWENIPRVLPENTQAVINESSWQWPAIFTWLQTAGNVSRHEMYRTFNCGVGMVIALSAPEADKALALLNEKGENAWKIGIIKASDSEQRVVIE</sequence>
<reference key="1">
    <citation type="journal article" date="2004" name="Nat. Genet.">
        <title>Comparison of genome degradation in Paratyphi A and Typhi, human-restricted serovars of Salmonella enterica that cause typhoid.</title>
        <authorList>
            <person name="McClelland M."/>
            <person name="Sanderson K.E."/>
            <person name="Clifton S.W."/>
            <person name="Latreille P."/>
            <person name="Porwollik S."/>
            <person name="Sabo A."/>
            <person name="Meyer R."/>
            <person name="Bieri T."/>
            <person name="Ozersky P."/>
            <person name="McLellan M."/>
            <person name="Harkins C.R."/>
            <person name="Wang C."/>
            <person name="Nguyen C."/>
            <person name="Berghoff A."/>
            <person name="Elliott G."/>
            <person name="Kohlberg S."/>
            <person name="Strong C."/>
            <person name="Du F."/>
            <person name="Carter J."/>
            <person name="Kremizki C."/>
            <person name="Layman D."/>
            <person name="Leonard S."/>
            <person name="Sun H."/>
            <person name="Fulton L."/>
            <person name="Nash W."/>
            <person name="Miner T."/>
            <person name="Minx P."/>
            <person name="Delehaunty K."/>
            <person name="Fronick C."/>
            <person name="Magrini V."/>
            <person name="Nhan M."/>
            <person name="Warren W."/>
            <person name="Florea L."/>
            <person name="Spieth J."/>
            <person name="Wilson R.K."/>
        </authorList>
    </citation>
    <scope>NUCLEOTIDE SEQUENCE [LARGE SCALE GENOMIC DNA]</scope>
    <source>
        <strain>ATCC 9150 / SARB42</strain>
    </source>
</reference>
<protein>
    <recommendedName>
        <fullName evidence="2">Phosphoribosylformylglycinamidine cyclo-ligase</fullName>
        <ecNumber evidence="2">6.3.3.1</ecNumber>
    </recommendedName>
    <alternativeName>
        <fullName evidence="2">AIR synthase</fullName>
    </alternativeName>
    <alternativeName>
        <fullName evidence="2">AIRS</fullName>
    </alternativeName>
    <alternativeName>
        <fullName evidence="2">Phosphoribosyl-aminoimidazole synthetase</fullName>
    </alternativeName>
</protein>